<accession>Q2IJN7</accession>
<dbReference type="EMBL" id="CP000251">
    <property type="protein sequence ID" value="ABC81870.1"/>
    <property type="molecule type" value="Genomic_DNA"/>
</dbReference>
<dbReference type="RefSeq" id="WP_011421152.1">
    <property type="nucleotide sequence ID" value="NC_007760.1"/>
</dbReference>
<dbReference type="SMR" id="Q2IJN7"/>
<dbReference type="STRING" id="290397.Adeh_2100"/>
<dbReference type="KEGG" id="ade:Adeh_2100"/>
<dbReference type="eggNOG" id="COG1301">
    <property type="taxonomic scope" value="Bacteria"/>
</dbReference>
<dbReference type="HOGENOM" id="CLU_019375_7_0_7"/>
<dbReference type="OrthoDB" id="9766690at2"/>
<dbReference type="Proteomes" id="UP000001935">
    <property type="component" value="Chromosome"/>
</dbReference>
<dbReference type="GO" id="GO:0005886">
    <property type="term" value="C:plasma membrane"/>
    <property type="evidence" value="ECO:0007669"/>
    <property type="project" value="UniProtKB-SubCell"/>
</dbReference>
<dbReference type="GO" id="GO:0015138">
    <property type="term" value="F:fumarate transmembrane transporter activity"/>
    <property type="evidence" value="ECO:0007669"/>
    <property type="project" value="TreeGrafter"/>
</dbReference>
<dbReference type="GO" id="GO:0015366">
    <property type="term" value="F:malate:proton symporter activity"/>
    <property type="evidence" value="ECO:0007669"/>
    <property type="project" value="TreeGrafter"/>
</dbReference>
<dbReference type="GO" id="GO:0015141">
    <property type="term" value="F:succinate transmembrane transporter activity"/>
    <property type="evidence" value="ECO:0007669"/>
    <property type="project" value="TreeGrafter"/>
</dbReference>
<dbReference type="GO" id="GO:0070778">
    <property type="term" value="P:L-aspartate transmembrane transport"/>
    <property type="evidence" value="ECO:0007669"/>
    <property type="project" value="TreeGrafter"/>
</dbReference>
<dbReference type="FunFam" id="1.10.3860.10:FF:000001">
    <property type="entry name" value="C4-dicarboxylate transport protein"/>
    <property type="match status" value="1"/>
</dbReference>
<dbReference type="Gene3D" id="1.10.3860.10">
    <property type="entry name" value="Sodium:dicarboxylate symporter"/>
    <property type="match status" value="1"/>
</dbReference>
<dbReference type="HAMAP" id="MF_01300">
    <property type="entry name" value="C4_dicarb_transport"/>
    <property type="match status" value="1"/>
</dbReference>
<dbReference type="InterPro" id="IPR023954">
    <property type="entry name" value="C4_dicarb_transport"/>
</dbReference>
<dbReference type="InterPro" id="IPR001991">
    <property type="entry name" value="Na-dicarboxylate_symporter"/>
</dbReference>
<dbReference type="InterPro" id="IPR018107">
    <property type="entry name" value="Na-dicarboxylate_symporter_CS"/>
</dbReference>
<dbReference type="InterPro" id="IPR036458">
    <property type="entry name" value="Na:dicarbo_symporter_sf"/>
</dbReference>
<dbReference type="NCBIfam" id="NF002461">
    <property type="entry name" value="PRK01663.1"/>
    <property type="match status" value="1"/>
</dbReference>
<dbReference type="NCBIfam" id="NF009587">
    <property type="entry name" value="PRK13027.1"/>
    <property type="match status" value="1"/>
</dbReference>
<dbReference type="PANTHER" id="PTHR42865:SF1">
    <property type="entry name" value="AEROBIC C4-DICARBOXYLATE TRANSPORT PROTEIN"/>
    <property type="match status" value="1"/>
</dbReference>
<dbReference type="PANTHER" id="PTHR42865">
    <property type="entry name" value="PROTON/GLUTAMATE-ASPARTATE SYMPORTER"/>
    <property type="match status" value="1"/>
</dbReference>
<dbReference type="Pfam" id="PF00375">
    <property type="entry name" value="SDF"/>
    <property type="match status" value="1"/>
</dbReference>
<dbReference type="PRINTS" id="PR00173">
    <property type="entry name" value="EDTRNSPORT"/>
</dbReference>
<dbReference type="SUPFAM" id="SSF118215">
    <property type="entry name" value="Proton glutamate symport protein"/>
    <property type="match status" value="1"/>
</dbReference>
<dbReference type="PROSITE" id="PS00713">
    <property type="entry name" value="NA_DICARBOXYL_SYMP_1"/>
    <property type="match status" value="1"/>
</dbReference>
<dbReference type="PROSITE" id="PS00714">
    <property type="entry name" value="NA_DICARBOXYL_SYMP_2"/>
    <property type="match status" value="1"/>
</dbReference>
<evidence type="ECO:0000255" key="1">
    <source>
        <dbReference type="HAMAP-Rule" id="MF_01300"/>
    </source>
</evidence>
<evidence type="ECO:0000256" key="2">
    <source>
        <dbReference type="SAM" id="MobiDB-lite"/>
    </source>
</evidence>
<sequence length="440" mass="46083">MKRLARSLYLQVLLAVVLGALVGHLFPATGASLKPLGDGFIKLVKMLIAPIVFATVVTGIAKMGDLRKVGRVGLKGLLYFEVLTTVALAIGLVVARLARPGAGMNVDPATLDTKAIASYTNGAQAHGTVDFLMNVIPRDVADAFARGDILQVLLFSVLFGAALAALKDKGRPVLEFVDGLSLVLFRIVGFVMRLAPVGAFGAMAFTVGKYGIATLLSLGKLIACFYATSALFVVLMLGLVLRWCGLSLFRFLRYIKEEIFVVLGTSSSESALPLMMRKMEKLGCSKPVVGLVVPMGYSFNLDGTSIYLTLATLFIAQATNTHVTLVQELEILAVLLLTSKGAAAVTGGGFITLAATLSAVGNIPVAGLALLLGVDRFMSEARAITNLIGNGVASVAVSRWEGELDQARARAVLAGTVPDEVEPANDPEPPAMAAGLGLHG</sequence>
<keyword id="KW-0997">Cell inner membrane</keyword>
<keyword id="KW-1003">Cell membrane</keyword>
<keyword id="KW-0472">Membrane</keyword>
<keyword id="KW-1185">Reference proteome</keyword>
<keyword id="KW-0769">Symport</keyword>
<keyword id="KW-0812">Transmembrane</keyword>
<keyword id="KW-1133">Transmembrane helix</keyword>
<keyword id="KW-0813">Transport</keyword>
<gene>
    <name evidence="1" type="primary">dctA</name>
    <name type="ordered locus">Adeh_2100</name>
</gene>
<organism>
    <name type="scientific">Anaeromyxobacter dehalogenans (strain 2CP-C)</name>
    <dbReference type="NCBI Taxonomy" id="290397"/>
    <lineage>
        <taxon>Bacteria</taxon>
        <taxon>Pseudomonadati</taxon>
        <taxon>Myxococcota</taxon>
        <taxon>Myxococcia</taxon>
        <taxon>Myxococcales</taxon>
        <taxon>Cystobacterineae</taxon>
        <taxon>Anaeromyxobacteraceae</taxon>
        <taxon>Anaeromyxobacter</taxon>
    </lineage>
</organism>
<reference key="1">
    <citation type="submission" date="2006-01" db="EMBL/GenBank/DDBJ databases">
        <title>Complete sequence of Anaeromyxobacter dehalogenans 2CP-C.</title>
        <authorList>
            <person name="Copeland A."/>
            <person name="Lucas S."/>
            <person name="Lapidus A."/>
            <person name="Barry K."/>
            <person name="Detter J.C."/>
            <person name="Glavina T."/>
            <person name="Hammon N."/>
            <person name="Israni S."/>
            <person name="Pitluck S."/>
            <person name="Brettin T."/>
            <person name="Bruce D."/>
            <person name="Han C."/>
            <person name="Tapia R."/>
            <person name="Gilna P."/>
            <person name="Kiss H."/>
            <person name="Schmutz J."/>
            <person name="Larimer F."/>
            <person name="Land M."/>
            <person name="Kyrpides N."/>
            <person name="Anderson I."/>
            <person name="Sanford R.A."/>
            <person name="Ritalahti K.M."/>
            <person name="Thomas H.S."/>
            <person name="Kirby J.R."/>
            <person name="Zhulin I.B."/>
            <person name="Loeffler F.E."/>
            <person name="Richardson P."/>
        </authorList>
    </citation>
    <scope>NUCLEOTIDE SEQUENCE [LARGE SCALE GENOMIC DNA]</scope>
    <source>
        <strain>2CP-C</strain>
    </source>
</reference>
<comment type="function">
    <text evidence="1">Responsible for the transport of dicarboxylates such as succinate, fumarate, and malate from the periplasm across the membrane.</text>
</comment>
<comment type="subcellular location">
    <subcellularLocation>
        <location evidence="1">Cell inner membrane</location>
        <topology evidence="1">Multi-pass membrane protein</topology>
    </subcellularLocation>
</comment>
<comment type="similarity">
    <text evidence="1">Belongs to the dicarboxylate/amino acid:cation symporter (DAACS) (TC 2.A.23) family.</text>
</comment>
<feature type="chain" id="PRO_0000321967" description="C4-dicarboxylate transport protein">
    <location>
        <begin position="1"/>
        <end position="440"/>
    </location>
</feature>
<feature type="transmembrane region" description="Helical" evidence="1">
    <location>
        <begin position="8"/>
        <end position="28"/>
    </location>
</feature>
<feature type="transmembrane region" description="Helical" evidence="1">
    <location>
        <begin position="40"/>
        <end position="60"/>
    </location>
</feature>
<feature type="transmembrane region" description="Helical" evidence="1">
    <location>
        <begin position="74"/>
        <end position="94"/>
    </location>
</feature>
<feature type="transmembrane region" description="Helical" evidence="1">
    <location>
        <begin position="147"/>
        <end position="167"/>
    </location>
</feature>
<feature type="transmembrane region" description="Helical" evidence="1">
    <location>
        <begin position="187"/>
        <end position="207"/>
    </location>
</feature>
<feature type="transmembrane region" description="Helical" evidence="1">
    <location>
        <begin position="221"/>
        <end position="241"/>
    </location>
</feature>
<feature type="transmembrane region" description="Helical" evidence="1">
    <location>
        <begin position="288"/>
        <end position="308"/>
    </location>
</feature>
<feature type="transmembrane region" description="Helical" evidence="1">
    <location>
        <begin position="354"/>
        <end position="374"/>
    </location>
</feature>
<feature type="region of interest" description="Disordered" evidence="2">
    <location>
        <begin position="419"/>
        <end position="440"/>
    </location>
</feature>
<proteinExistence type="inferred from homology"/>
<protein>
    <recommendedName>
        <fullName evidence="1">C4-dicarboxylate transport protein</fullName>
    </recommendedName>
</protein>
<name>DCTA_ANADE</name>